<organism>
    <name type="scientific">Tropheryma whipplei (strain TW08/27)</name>
    <name type="common">Whipple's bacillus</name>
    <dbReference type="NCBI Taxonomy" id="218496"/>
    <lineage>
        <taxon>Bacteria</taxon>
        <taxon>Bacillati</taxon>
        <taxon>Actinomycetota</taxon>
        <taxon>Actinomycetes</taxon>
        <taxon>Micrococcales</taxon>
        <taxon>Tropherymataceae</taxon>
        <taxon>Tropheryma</taxon>
    </lineage>
</organism>
<gene>
    <name evidence="1" type="primary">infC</name>
    <name type="ordered locus">TW608</name>
</gene>
<proteinExistence type="inferred from homology"/>
<keyword id="KW-0963">Cytoplasm</keyword>
<keyword id="KW-0396">Initiation factor</keyword>
<keyword id="KW-0648">Protein biosynthesis</keyword>
<comment type="function">
    <text evidence="1">IF-3 binds to the 30S ribosomal subunit and shifts the equilibrium between 70S ribosomes and their 50S and 30S subunits in favor of the free subunits, thus enhancing the availability of 30S subunits on which protein synthesis initiation begins.</text>
</comment>
<comment type="subunit">
    <text evidence="1">Monomer.</text>
</comment>
<comment type="subcellular location">
    <subcellularLocation>
        <location evidence="1">Cytoplasm</location>
    </subcellularLocation>
</comment>
<comment type="similarity">
    <text evidence="1">Belongs to the IF-3 family.</text>
</comment>
<sequence>MGESITAPEVRLINSDGGPLGVVSRSVALRLAGEVGLDLVEVSPFSKPPVVKIMDYGKFRYEASQKAKEARRRQSGVSVKEVRFRLKICDNDYDVKLRKAISFLQAGDKVKVMILFRGREQSRPELGVKLLKKFADDISEFGSADSLSRTDGRGMAIMVSPIKSKTIVREKSSHAQKGDKQP</sequence>
<feature type="chain" id="PRO_0000177601" description="Translation initiation factor IF-3">
    <location>
        <begin position="1"/>
        <end position="182"/>
    </location>
</feature>
<accession>Q83HH0</accession>
<evidence type="ECO:0000255" key="1">
    <source>
        <dbReference type="HAMAP-Rule" id="MF_00080"/>
    </source>
</evidence>
<dbReference type="EMBL" id="BX251412">
    <property type="protein sequence ID" value="CAD67273.1"/>
    <property type="molecule type" value="Genomic_DNA"/>
</dbReference>
<dbReference type="RefSeq" id="WP_011096553.1">
    <property type="nucleotide sequence ID" value="NC_004551.1"/>
</dbReference>
<dbReference type="SMR" id="Q83HH0"/>
<dbReference type="GeneID" id="67388390"/>
<dbReference type="KEGG" id="tws:TW608"/>
<dbReference type="HOGENOM" id="CLU_054919_3_2_11"/>
<dbReference type="GO" id="GO:0005829">
    <property type="term" value="C:cytosol"/>
    <property type="evidence" value="ECO:0007669"/>
    <property type="project" value="TreeGrafter"/>
</dbReference>
<dbReference type="GO" id="GO:0016020">
    <property type="term" value="C:membrane"/>
    <property type="evidence" value="ECO:0007669"/>
    <property type="project" value="TreeGrafter"/>
</dbReference>
<dbReference type="GO" id="GO:0043022">
    <property type="term" value="F:ribosome binding"/>
    <property type="evidence" value="ECO:0007669"/>
    <property type="project" value="TreeGrafter"/>
</dbReference>
<dbReference type="GO" id="GO:0003743">
    <property type="term" value="F:translation initiation factor activity"/>
    <property type="evidence" value="ECO:0007669"/>
    <property type="project" value="UniProtKB-UniRule"/>
</dbReference>
<dbReference type="GO" id="GO:0032790">
    <property type="term" value="P:ribosome disassembly"/>
    <property type="evidence" value="ECO:0007669"/>
    <property type="project" value="TreeGrafter"/>
</dbReference>
<dbReference type="FunFam" id="3.30.110.10:FF:000001">
    <property type="entry name" value="Translation initiation factor IF-3"/>
    <property type="match status" value="1"/>
</dbReference>
<dbReference type="Gene3D" id="3.30.110.10">
    <property type="entry name" value="Translation initiation factor 3 (IF-3), C-terminal domain"/>
    <property type="match status" value="1"/>
</dbReference>
<dbReference type="Gene3D" id="3.10.20.80">
    <property type="entry name" value="Translation initiation factor 3 (IF-3), N-terminal domain"/>
    <property type="match status" value="1"/>
</dbReference>
<dbReference type="HAMAP" id="MF_00080">
    <property type="entry name" value="IF_3"/>
    <property type="match status" value="1"/>
</dbReference>
<dbReference type="InterPro" id="IPR036788">
    <property type="entry name" value="T_IF-3_C_sf"/>
</dbReference>
<dbReference type="InterPro" id="IPR036787">
    <property type="entry name" value="T_IF-3_N_sf"/>
</dbReference>
<dbReference type="InterPro" id="IPR019813">
    <property type="entry name" value="Translation_initiation_fac3_CS"/>
</dbReference>
<dbReference type="InterPro" id="IPR001288">
    <property type="entry name" value="Translation_initiation_fac_3"/>
</dbReference>
<dbReference type="InterPro" id="IPR019815">
    <property type="entry name" value="Translation_initiation_fac_3_C"/>
</dbReference>
<dbReference type="InterPro" id="IPR019814">
    <property type="entry name" value="Translation_initiation_fac_3_N"/>
</dbReference>
<dbReference type="NCBIfam" id="TIGR00168">
    <property type="entry name" value="infC"/>
    <property type="match status" value="1"/>
</dbReference>
<dbReference type="PANTHER" id="PTHR10938">
    <property type="entry name" value="TRANSLATION INITIATION FACTOR IF-3"/>
    <property type="match status" value="1"/>
</dbReference>
<dbReference type="PANTHER" id="PTHR10938:SF0">
    <property type="entry name" value="TRANSLATION INITIATION FACTOR IF-3, MITOCHONDRIAL"/>
    <property type="match status" value="1"/>
</dbReference>
<dbReference type="Pfam" id="PF00707">
    <property type="entry name" value="IF3_C"/>
    <property type="match status" value="1"/>
</dbReference>
<dbReference type="Pfam" id="PF05198">
    <property type="entry name" value="IF3_N"/>
    <property type="match status" value="1"/>
</dbReference>
<dbReference type="SUPFAM" id="SSF55200">
    <property type="entry name" value="Translation initiation factor IF3, C-terminal domain"/>
    <property type="match status" value="1"/>
</dbReference>
<dbReference type="SUPFAM" id="SSF54364">
    <property type="entry name" value="Translation initiation factor IF3, N-terminal domain"/>
    <property type="match status" value="1"/>
</dbReference>
<dbReference type="PROSITE" id="PS00938">
    <property type="entry name" value="IF3"/>
    <property type="match status" value="1"/>
</dbReference>
<protein>
    <recommendedName>
        <fullName evidence="1">Translation initiation factor IF-3</fullName>
    </recommendedName>
</protein>
<reference key="1">
    <citation type="journal article" date="2003" name="Lancet">
        <title>Sequencing and analysis of the genome of the Whipple's disease bacterium Tropheryma whipplei.</title>
        <authorList>
            <person name="Bentley S.D."/>
            <person name="Maiwald M."/>
            <person name="Murphy L.D."/>
            <person name="Pallen M.J."/>
            <person name="Yeats C.A."/>
            <person name="Dover L.G."/>
            <person name="Norbertczak H.T."/>
            <person name="Besra G.S."/>
            <person name="Quail M.A."/>
            <person name="Harris D.E."/>
            <person name="von Herbay A."/>
            <person name="Goble A."/>
            <person name="Rutter S."/>
            <person name="Squares R."/>
            <person name="Squares S."/>
            <person name="Barrell B.G."/>
            <person name="Parkhill J."/>
            <person name="Relman D.A."/>
        </authorList>
    </citation>
    <scope>NUCLEOTIDE SEQUENCE [LARGE SCALE GENOMIC DNA]</scope>
    <source>
        <strain>TW08/27</strain>
    </source>
</reference>
<name>IF3_TROW8</name>